<accession>P26074</accession>
<accession>Q67225</accession>
<organism>
    <name type="scientific">Influenza A virus (strain A/New Jersey/8/1976 H1N1)</name>
    <dbReference type="NCBI Taxonomy" id="379756"/>
    <lineage>
        <taxon>Viruses</taxon>
        <taxon>Riboviria</taxon>
        <taxon>Orthornavirae</taxon>
        <taxon>Negarnaviricota</taxon>
        <taxon>Polyploviricotina</taxon>
        <taxon>Insthoviricetes</taxon>
        <taxon>Articulavirales</taxon>
        <taxon>Orthomyxoviridae</taxon>
        <taxon>Alphainfluenzavirus</taxon>
        <taxon>Alphainfluenzavirus influenzae</taxon>
        <taxon>Influenza A virus</taxon>
    </lineage>
</organism>
<organismHost>
    <name type="scientific">Aves</name>
    <dbReference type="NCBI Taxonomy" id="8782"/>
</organismHost>
<organismHost>
    <name type="scientific">Homo sapiens</name>
    <name type="common">Human</name>
    <dbReference type="NCBI Taxonomy" id="9606"/>
</organismHost>
<organismHost>
    <name type="scientific">Sus scrofa</name>
    <name type="common">Pig</name>
    <dbReference type="NCBI Taxonomy" id="9823"/>
</organismHost>
<protein>
    <recommendedName>
        <fullName evidence="1">Nucleoprotein</fullName>
    </recommendedName>
    <alternativeName>
        <fullName evidence="1">Nucleocapsid protein</fullName>
        <shortName evidence="1">Protein N</shortName>
    </alternativeName>
</protein>
<gene>
    <name evidence="1" type="primary">NP</name>
</gene>
<sequence length="498" mass="56005">MASQGTKRSYEQMETGGERQDATEIRASVGRMIGGIGRFYIQMCTELKLSDYEGRLIQNSITIERMVLSAFDERRNKYLEEHPSAGKDPKKTGGPIYKRIDGKWMRELILYDKEEIRRVWRQANNGEDATAGLTHIMIWHSNLNDATYQRTRALVRTGMDPRMCSLMQGSTLPRRSGAAGAAVKGVGTIAMELIGMIKRGINDRNFWRGENGRRTRIAYERMCNILKGKFQTAAQRAMMDQVRESRNPGNAEIEDLIFLARSALILRGSVAHKSCLPACVYGLAVASGHDFEREGYSLVGIDPFKLLQNSQVFSLIRPNENPAHKSQLVWMACHSAAFEDLRVSGFIRGKKVVPRGRLSTRGVQIASNENVEAMDSSTLELRSRYWAIRTRSGGNTNQQKASADQISVQPTFSVQRNLPFERATVMAAFIGDNEGRTSDMRTEIIRMMESAKPEDLSFQGRGVFELSDEKATNPIVPSFDMNNEGSYFFGDNAEEYDN</sequence>
<comment type="function">
    <text evidence="1">Encapsidates the negative strand viral RNA, protecting it from nucleases. The encapsidated genomic RNA is termed the ribonucleoprotein (RNP) and serves as template for transcription and replication. The RNP needs to be localized in the host nucleus to start an infectious cycle, but is too large to diffuse through the nuclear pore complex. NP comprises at least 2 nuclear localization signals that are responsible for the active RNP import into the nucleus through cellular importin alpha/beta pathway. Later in the infection, nclear export of RNPs are mediated through viral proteins NEP interacting with M1 which binds nucleoproteins. It is possible that nucleoprotein binds directly host exportin-1/XPO1 and plays an active role in RNPs nuclear export. M1 interaction with RNP seems to hide nucleoprotein's nuclear localization signals. Soon after a virion infects a new cell, M1 dissociates from the RNP under acidification of the virion driven by M2 protein. Dissociation of M1 from RNP unmasks nucleoprotein's nuclear localization signals, targeting the RNP to the nucleus.</text>
</comment>
<comment type="subunit">
    <text evidence="1">Homomultimerizes to form the nucleocapsid. May bind host exportin-1/XPO1. Binds to viral genomic RNA. Protein-RNA contacts are mediated by a combination of electrostatic interactions between positively charged residues and the phosphate backbone and planar interactions between aromatic side chains and bases.</text>
</comment>
<comment type="subcellular location">
    <subcellularLocation>
        <location evidence="1">Virion</location>
    </subcellularLocation>
    <subcellularLocation>
        <location evidence="1">Host nucleus</location>
    </subcellularLocation>
</comment>
<comment type="PTM">
    <text evidence="1">Late in virus-infected cells, may be cleaved from a 56-kDa protein to a 53-kDa protein by a cellular caspase. This cleavage might be a marker for the onset of apoptosis in infected cells or have a specific function in virus host interaction.</text>
</comment>
<comment type="similarity">
    <text evidence="1">Belongs to the influenza viruses nucleoprotein family.</text>
</comment>
<proteinExistence type="evidence at transcript level"/>
<reference key="1">
    <citation type="journal article" date="1991" name="J. Virol.">
        <title>Evolution of influenza A virus nucleoprotein genes: implications for the origins of H1N1 human and classical swine viruses.</title>
        <authorList>
            <person name="Gorman O.T."/>
            <person name="Bean W.J."/>
            <person name="Kawaoka Y."/>
            <person name="Donatelli I."/>
            <person name="Guo Y."/>
            <person name="Webster R.G."/>
        </authorList>
    </citation>
    <scope>NUCLEOTIDE SEQUENCE [GENOMIC RNA]</scope>
</reference>
<reference key="2">
    <citation type="journal article" date="1992" name="Virus Res.">
        <title>Genetic relatedness of the nucleoprotein (NP) of recent swine, turkey, and human influenza A virus (H1N1) isolates.</title>
        <authorList>
            <person name="Altmuller A."/>
            <person name="Kunerl M."/>
            <person name="Muller K."/>
            <person name="Hinshaw V.S."/>
            <person name="Fitch W.M."/>
            <person name="Scholtissek C."/>
        </authorList>
    </citation>
    <scope>NUCLEOTIDE SEQUENCE [MRNA]</scope>
</reference>
<feature type="chain" id="PRO_0000079088" description="Nucleoprotein">
    <location>
        <begin position="1"/>
        <end position="498"/>
    </location>
</feature>
<feature type="region of interest" description="Disordered" evidence="2">
    <location>
        <begin position="1"/>
        <end position="22"/>
    </location>
</feature>
<feature type="short sequence motif" description="Unconventional nuclear localization signal" evidence="1">
    <location>
        <begin position="1"/>
        <end position="18"/>
    </location>
</feature>
<feature type="short sequence motif" description="Bipartite nuclear localization signal" evidence="1">
    <location>
        <begin position="198"/>
        <end position="216"/>
    </location>
</feature>
<feature type="compositionally biased region" description="Basic and acidic residues" evidence="2">
    <location>
        <begin position="8"/>
        <end position="22"/>
    </location>
</feature>
<feature type="sequence conflict" description="In Ref. 2; AAA73108." ref="2">
    <original>G</original>
    <variation>R</variation>
    <location>
        <position position="195"/>
    </location>
</feature>
<feature type="sequence conflict" description="In Ref. 2; AAA73108." ref="2">
    <original>D</original>
    <variation>G</variation>
    <location>
        <position position="404"/>
    </location>
</feature>
<feature type="sequence conflict" description="In Ref. 2; AAA73108." ref="2">
    <original>N</original>
    <variation>Y</variation>
    <location>
        <position position="483"/>
    </location>
</feature>
<name>NCAP_I76A7</name>
<keyword id="KW-0167">Capsid protein</keyword>
<keyword id="KW-1139">Helical capsid protein</keyword>
<keyword id="KW-1048">Host nucleus</keyword>
<keyword id="KW-0945">Host-virus interaction</keyword>
<keyword id="KW-0687">Ribonucleoprotein</keyword>
<keyword id="KW-0694">RNA-binding</keyword>
<keyword id="KW-0543">Viral nucleoprotein</keyword>
<keyword id="KW-1163">Viral penetration into host nucleus</keyword>
<keyword id="KW-0946">Virion</keyword>
<keyword id="KW-1160">Virus entry into host cell</keyword>
<evidence type="ECO:0000255" key="1">
    <source>
        <dbReference type="HAMAP-Rule" id="MF_04070"/>
    </source>
</evidence>
<evidence type="ECO:0000256" key="2">
    <source>
        <dbReference type="SAM" id="MobiDB-lite"/>
    </source>
</evidence>
<dbReference type="EMBL" id="M63754">
    <property type="protein sequence ID" value="AAA52253.1"/>
    <property type="molecule type" value="Genomic_RNA"/>
</dbReference>
<dbReference type="EMBL" id="M76606">
    <property type="protein sequence ID" value="AAA73108.1"/>
    <property type="molecule type" value="mRNA"/>
</dbReference>
<dbReference type="SMR" id="P26074"/>
<dbReference type="GO" id="GO:0019029">
    <property type="term" value="C:helical viral capsid"/>
    <property type="evidence" value="ECO:0007669"/>
    <property type="project" value="UniProtKB-UniRule"/>
</dbReference>
<dbReference type="GO" id="GO:0043657">
    <property type="term" value="C:host cell"/>
    <property type="evidence" value="ECO:0007669"/>
    <property type="project" value="GOC"/>
</dbReference>
<dbReference type="GO" id="GO:0042025">
    <property type="term" value="C:host cell nucleus"/>
    <property type="evidence" value="ECO:0007669"/>
    <property type="project" value="UniProtKB-SubCell"/>
</dbReference>
<dbReference type="GO" id="GO:1990904">
    <property type="term" value="C:ribonucleoprotein complex"/>
    <property type="evidence" value="ECO:0007669"/>
    <property type="project" value="UniProtKB-KW"/>
</dbReference>
<dbReference type="GO" id="GO:0019013">
    <property type="term" value="C:viral nucleocapsid"/>
    <property type="evidence" value="ECO:0007669"/>
    <property type="project" value="UniProtKB-UniRule"/>
</dbReference>
<dbReference type="GO" id="GO:0003723">
    <property type="term" value="F:RNA binding"/>
    <property type="evidence" value="ECO:0007669"/>
    <property type="project" value="UniProtKB-UniRule"/>
</dbReference>
<dbReference type="GO" id="GO:0005198">
    <property type="term" value="F:structural molecule activity"/>
    <property type="evidence" value="ECO:0007669"/>
    <property type="project" value="UniProtKB-UniRule"/>
</dbReference>
<dbReference type="GO" id="GO:0046718">
    <property type="term" value="P:symbiont entry into host cell"/>
    <property type="evidence" value="ECO:0007669"/>
    <property type="project" value="UniProtKB-KW"/>
</dbReference>
<dbReference type="GO" id="GO:0075732">
    <property type="term" value="P:viral penetration into host nucleus"/>
    <property type="evidence" value="ECO:0007669"/>
    <property type="project" value="UniProtKB-UniRule"/>
</dbReference>
<dbReference type="HAMAP" id="MF_04070">
    <property type="entry name" value="INFV_NCAP"/>
    <property type="match status" value="1"/>
</dbReference>
<dbReference type="InterPro" id="IPR002141">
    <property type="entry name" value="Flu_NP"/>
</dbReference>
<dbReference type="Pfam" id="PF00506">
    <property type="entry name" value="Flu_NP"/>
    <property type="match status" value="1"/>
</dbReference>
<dbReference type="SUPFAM" id="SSF161003">
    <property type="entry name" value="flu NP-like"/>
    <property type="match status" value="1"/>
</dbReference>